<keyword id="KW-0065">Atherosclerosis</keyword>
<keyword id="KW-0153">Cholesterol metabolism</keyword>
<keyword id="KW-0963">Cytoplasm</keyword>
<keyword id="KW-0254">Endocytosis</keyword>
<keyword id="KW-0380">Hyperlipidemia</keyword>
<keyword id="KW-0443">Lipid metabolism</keyword>
<keyword id="KW-1185">Reference proteome</keyword>
<keyword id="KW-0753">Steroid metabolism</keyword>
<keyword id="KW-1207">Sterol metabolism</keyword>
<protein>
    <recommendedName>
        <fullName evidence="8">Low density lipoprotein receptor adapter protein 1-B</fullName>
    </recommendedName>
    <alternativeName>
        <fullName evidence="7">Autosomal recessive hypercholesterolemia protein homolog beta</fullName>
        <shortName evidence="7">ARH beta</shortName>
        <shortName evidence="7">xARH beta</shortName>
    </alternativeName>
</protein>
<comment type="function">
    <text evidence="6">Adapter protein (clathrin-associated sorting protein (CLASP)) required for efficient endocytosis of the LDL receptor (LDLR). Also involved in the vitellogenin receptor mediated endocytosis of nutrients during oogenesis.</text>
</comment>
<comment type="subunit">
    <text evidence="3 6">Interacts (via PID domain) with ldlr (via NPXY motif) (PubMed:12591597). Binds to soluble clathrin trimers and to the adapter protein complex 2 (AP-2, beta 2 subunit). Binds to phosphoinositides, which regulate clathrin bud assembly at the cell surface. Interacts with the VLDL receptor (vldlr) (By similarity). Interacts with the vitellogenin receptor (PubMed:12591597).</text>
</comment>
<comment type="subcellular location">
    <subcellularLocation>
        <location evidence="2">Cytoplasm</location>
    </subcellularLocation>
</comment>
<comment type="tissue specificity">
    <text>Expressed at high level during oogenesis and embryogenesis. Found at low level in the adult liver and spleen. Found at very low level in testis and heart. Not found in the oocyte vegetal cortex.</text>
</comment>
<comment type="developmental stage">
    <text>Expressed throughout oogenesis. Homogeneously distributed in stages I and II oocytes and only later localized primarily to the vegetal cortex. Expressed in early stage embryos, but expression decreases during gastrulation, reaching barely detectable levels by tailbud stages.</text>
</comment>
<comment type="domain">
    <text evidence="2">The [DE]-X(1,2)-F-X-X-[FL]-X-X-X-R motif mediates interaction the AP-2 complex subunit AP2B1.</text>
</comment>
<comment type="domain">
    <text evidence="1">The PID domain mediates interaction with the NPXY internalization motif of LDLR.</text>
</comment>
<organism>
    <name type="scientific">Xenopus laevis</name>
    <name type="common">African clawed frog</name>
    <dbReference type="NCBI Taxonomy" id="8355"/>
    <lineage>
        <taxon>Eukaryota</taxon>
        <taxon>Metazoa</taxon>
        <taxon>Chordata</taxon>
        <taxon>Craniata</taxon>
        <taxon>Vertebrata</taxon>
        <taxon>Euteleostomi</taxon>
        <taxon>Amphibia</taxon>
        <taxon>Batrachia</taxon>
        <taxon>Anura</taxon>
        <taxon>Pipoidea</taxon>
        <taxon>Pipidae</taxon>
        <taxon>Xenopodinae</taxon>
        <taxon>Xenopus</taxon>
        <taxon>Xenopus</taxon>
    </lineage>
</organism>
<gene>
    <name evidence="8" type="primary">ldlrap1-b</name>
</gene>
<evidence type="ECO:0000250" key="1">
    <source>
        <dbReference type="UniProtKB" id="D3ZAR1"/>
    </source>
</evidence>
<evidence type="ECO:0000250" key="2">
    <source>
        <dbReference type="UniProtKB" id="Q5SW96"/>
    </source>
</evidence>
<evidence type="ECO:0000250" key="3">
    <source>
        <dbReference type="UniProtKB" id="Q8C142"/>
    </source>
</evidence>
<evidence type="ECO:0000255" key="4">
    <source>
        <dbReference type="PROSITE-ProRule" id="PRU00148"/>
    </source>
</evidence>
<evidence type="ECO:0000256" key="5">
    <source>
        <dbReference type="SAM" id="MobiDB-lite"/>
    </source>
</evidence>
<evidence type="ECO:0000269" key="6">
    <source>
    </source>
</evidence>
<evidence type="ECO:0000303" key="7">
    <source>
    </source>
</evidence>
<evidence type="ECO:0000305" key="8"/>
<accession>Q67FQ3</accession>
<accession>Q6NTZ2</accession>
<feature type="chain" id="PRO_0000064674" description="Low density lipoprotein receptor adapter protein 1-B">
    <location>
        <begin position="1"/>
        <end position="309"/>
    </location>
</feature>
<feature type="domain" description="PID" evidence="4">
    <location>
        <begin position="41"/>
        <end position="195"/>
    </location>
</feature>
<feature type="region of interest" description="Disordered" evidence="5">
    <location>
        <begin position="179"/>
        <end position="201"/>
    </location>
</feature>
<feature type="region of interest" description="AP-2 complex binding" evidence="2">
    <location>
        <begin position="250"/>
        <end position="277"/>
    </location>
</feature>
<feature type="short sequence motif" description="Clathrin box" evidence="2">
    <location>
        <begin position="213"/>
        <end position="217"/>
    </location>
</feature>
<feature type="short sequence motif" description="[DE]-X(1,2)-F-X-X-[FL]-X-X-X-R motif" evidence="2">
    <location>
        <begin position="258"/>
        <end position="267"/>
    </location>
</feature>
<feature type="compositionally biased region" description="Low complexity" evidence="5">
    <location>
        <begin position="189"/>
        <end position="201"/>
    </location>
</feature>
<feature type="sequence conflict" description="In Ref. 3; AAH68810." evidence="8" ref="3">
    <original>E</original>
    <variation>K</variation>
    <location>
        <position position="138"/>
    </location>
</feature>
<sequence>MDALKSAGRAIIRSPSIAKQSWGGGKHKKLPENWTDTRETLLEGMLFHLKYLGMTLVEQPKGEELSATAVKRIVATAKASGKKLQKVLLKVSPRGIILYDSASNQLIENVSIYRISYCTADKMHDKVFAYIAQSQQNETLECHAFLCTKRKMAQAVTLTVAQAFKVAFEFWQVSRENKDKREKSGSDGEGASSSQSDGSSSITSLKASASANLLDFEDCTKAFDVLNASDNHIEDLFRQNSTNENNNIVWELDDGLDEAFARLAESRTNPQVLDIGLTANDLQSEECLSPTSWDKLELNPAEADELFMF</sequence>
<dbReference type="EMBL" id="AY344473">
    <property type="protein sequence ID" value="AAR05663.1"/>
    <property type="molecule type" value="mRNA"/>
</dbReference>
<dbReference type="EMBL" id="BC068810">
    <property type="protein sequence ID" value="AAH68810.1"/>
    <property type="molecule type" value="mRNA"/>
</dbReference>
<dbReference type="SMR" id="Q67FQ3"/>
<dbReference type="DNASU" id="414519"/>
<dbReference type="GeneID" id="414519"/>
<dbReference type="KEGG" id="xla:414519"/>
<dbReference type="AGR" id="Xenbase:XB-GENE-954266"/>
<dbReference type="CTD" id="414519"/>
<dbReference type="Xenbase" id="XB-GENE-954266">
    <property type="gene designation" value="ldlrap1.L"/>
</dbReference>
<dbReference type="OMA" id="CTADKAH"/>
<dbReference type="OrthoDB" id="9999955at2759"/>
<dbReference type="Proteomes" id="UP000186698">
    <property type="component" value="Chromosome 2L"/>
</dbReference>
<dbReference type="Bgee" id="414519">
    <property type="expression patterns" value="Expressed in blastula and 19 other cell types or tissues"/>
</dbReference>
<dbReference type="GO" id="GO:0005769">
    <property type="term" value="C:early endosome"/>
    <property type="evidence" value="ECO:0000318"/>
    <property type="project" value="GO_Central"/>
</dbReference>
<dbReference type="GO" id="GO:0008203">
    <property type="term" value="P:cholesterol metabolic process"/>
    <property type="evidence" value="ECO:0007669"/>
    <property type="project" value="UniProtKB-KW"/>
</dbReference>
<dbReference type="GO" id="GO:0006897">
    <property type="term" value="P:endocytosis"/>
    <property type="evidence" value="ECO:0007669"/>
    <property type="project" value="UniProtKB-KW"/>
</dbReference>
<dbReference type="CDD" id="cd13159">
    <property type="entry name" value="PTB_LDLRAP-mammal-like"/>
    <property type="match status" value="1"/>
</dbReference>
<dbReference type="FunFam" id="2.30.29.30:FF:000137">
    <property type="entry name" value="Low density lipoprotein receptor adapter protein 1"/>
    <property type="match status" value="1"/>
</dbReference>
<dbReference type="Gene3D" id="2.30.29.30">
    <property type="entry name" value="Pleckstrin-homology domain (PH domain)/Phosphotyrosine-binding domain (PTB)"/>
    <property type="match status" value="1"/>
</dbReference>
<dbReference type="InterPro" id="IPR051133">
    <property type="entry name" value="Adapter_Engulfment-Domain"/>
</dbReference>
<dbReference type="InterPro" id="IPR011993">
    <property type="entry name" value="PH-like_dom_sf"/>
</dbReference>
<dbReference type="InterPro" id="IPR006020">
    <property type="entry name" value="PTB/PI_dom"/>
</dbReference>
<dbReference type="PANTHER" id="PTHR11232:SF35">
    <property type="entry name" value="LOW DENSITY LIPOPROTEIN RECEPTOR ADAPTER PROTEIN 1"/>
    <property type="match status" value="1"/>
</dbReference>
<dbReference type="PANTHER" id="PTHR11232">
    <property type="entry name" value="PHOSPHOTYROSINE INTERACTION DOMAIN-CONTAINING FAMILY MEMBER"/>
    <property type="match status" value="1"/>
</dbReference>
<dbReference type="Pfam" id="PF00640">
    <property type="entry name" value="PID"/>
    <property type="match status" value="1"/>
</dbReference>
<dbReference type="SMART" id="SM00462">
    <property type="entry name" value="PTB"/>
    <property type="match status" value="1"/>
</dbReference>
<dbReference type="SUPFAM" id="SSF50729">
    <property type="entry name" value="PH domain-like"/>
    <property type="match status" value="1"/>
</dbReference>
<dbReference type="PROSITE" id="PS01179">
    <property type="entry name" value="PID"/>
    <property type="match status" value="1"/>
</dbReference>
<proteinExistence type="evidence at protein level"/>
<reference key="1">
    <citation type="journal article" date="2003" name="Mech. Dev.">
        <title>Cell-autonomous and signal-dependent expression of liver and intestine marker genes in pluripotent precursor cells from Xenopus embryos.</title>
        <authorList>
            <person name="Chen Y."/>
            <person name="Jurgens K."/>
            <person name="Hollemann T."/>
            <person name="Claussen M."/>
            <person name="Ramadori G."/>
            <person name="Pieler T."/>
        </authorList>
    </citation>
    <scope>NUCLEOTIDE SEQUENCE [MRNA]</scope>
    <scope>FUNCTION</scope>
    <scope>INTERACTION WITH LDLR AND THE VITELLOGENIN RECEPTOR</scope>
</reference>
<reference key="2">
    <citation type="journal article" date="2004" name="Mech. Dev.">
        <title>Polarized distribution of mRNAs encoding a putative LDL receptor adaptor protein, xARH (autosomal recessive hypercholesterolemia) in Xenopus oocytes.</title>
        <authorList>
            <person name="Zhou Y."/>
            <person name="Zhang J."/>
            <person name="King M.L."/>
        </authorList>
    </citation>
    <scope>NUCLEOTIDE SEQUENCE [MRNA]</scope>
    <source>
        <tissue>Oocyte</tissue>
    </source>
</reference>
<reference key="3">
    <citation type="submission" date="2004-04" db="EMBL/GenBank/DDBJ databases">
        <authorList>
            <consortium name="NIH - Xenopus Gene Collection (XGC) project"/>
        </authorList>
    </citation>
    <scope>NUCLEOTIDE SEQUENCE [LARGE SCALE MRNA]</scope>
    <source>
        <tissue>Embryo</tissue>
    </source>
</reference>
<name>ARHB_XENLA</name>